<organism>
    <name type="scientific">Listeria monocytogenes serotype 4b (strain F2365)</name>
    <dbReference type="NCBI Taxonomy" id="265669"/>
    <lineage>
        <taxon>Bacteria</taxon>
        <taxon>Bacillati</taxon>
        <taxon>Bacillota</taxon>
        <taxon>Bacilli</taxon>
        <taxon>Bacillales</taxon>
        <taxon>Listeriaceae</taxon>
        <taxon>Listeria</taxon>
    </lineage>
</organism>
<reference key="1">
    <citation type="journal article" date="2004" name="Nucleic Acids Res.">
        <title>Whole genome comparisons of serotype 4b and 1/2a strains of the food-borne pathogen Listeria monocytogenes reveal new insights into the core genome components of this species.</title>
        <authorList>
            <person name="Nelson K.E."/>
            <person name="Fouts D.E."/>
            <person name="Mongodin E.F."/>
            <person name="Ravel J."/>
            <person name="DeBoy R.T."/>
            <person name="Kolonay J.F."/>
            <person name="Rasko D.A."/>
            <person name="Angiuoli S.V."/>
            <person name="Gill S.R."/>
            <person name="Paulsen I.T."/>
            <person name="Peterson J.D."/>
            <person name="White O."/>
            <person name="Nelson W.C."/>
            <person name="Nierman W.C."/>
            <person name="Beanan M.J."/>
            <person name="Brinkac L.M."/>
            <person name="Daugherty S.C."/>
            <person name="Dodson R.J."/>
            <person name="Durkin A.S."/>
            <person name="Madupu R."/>
            <person name="Haft D.H."/>
            <person name="Selengut J."/>
            <person name="Van Aken S.E."/>
            <person name="Khouri H.M."/>
            <person name="Fedorova N."/>
            <person name="Forberger H.A."/>
            <person name="Tran B."/>
            <person name="Kathariou S."/>
            <person name="Wonderling L.D."/>
            <person name="Uhlich G.A."/>
            <person name="Bayles D.O."/>
            <person name="Luchansky J.B."/>
            <person name="Fraser C.M."/>
        </authorList>
    </citation>
    <scope>NUCLEOTIDE SEQUENCE [LARGE SCALE GENOMIC DNA]</scope>
    <source>
        <strain>F2365</strain>
    </source>
</reference>
<sequence>MKLLLKNINELAAKQKSEGLTAFEKERQAALRQEYLKKIRGTVQDNLHHVTIIDPLGDDVTPKKLKEIQAELRG</sequence>
<keyword id="KW-0963">Cytoplasm</keyword>
<feature type="chain" id="PRO_0000094978" description="UPF0291 protein LMOf2365_0526">
    <location>
        <begin position="1"/>
        <end position="74"/>
    </location>
</feature>
<gene>
    <name type="ordered locus">LMOf2365_0526</name>
</gene>
<evidence type="ECO:0000255" key="1">
    <source>
        <dbReference type="HAMAP-Rule" id="MF_01103"/>
    </source>
</evidence>
<protein>
    <recommendedName>
        <fullName evidence="1">UPF0291 protein LMOf2365_0526</fullName>
    </recommendedName>
</protein>
<comment type="subcellular location">
    <subcellularLocation>
        <location evidence="1">Cytoplasm</location>
    </subcellularLocation>
</comment>
<comment type="similarity">
    <text evidence="1">Belongs to the UPF0291 family.</text>
</comment>
<accession>Q723F3</accession>
<dbReference type="EMBL" id="AE017262">
    <property type="protein sequence ID" value="AAT03308.1"/>
    <property type="molecule type" value="Genomic_DNA"/>
</dbReference>
<dbReference type="RefSeq" id="WP_003721282.1">
    <property type="nucleotide sequence ID" value="NC_002973.6"/>
</dbReference>
<dbReference type="SMR" id="Q723F3"/>
<dbReference type="KEGG" id="lmf:LMOf2365_0526"/>
<dbReference type="HOGENOM" id="CLU_173137_0_2_9"/>
<dbReference type="GO" id="GO:0005737">
    <property type="term" value="C:cytoplasm"/>
    <property type="evidence" value="ECO:0007669"/>
    <property type="project" value="UniProtKB-SubCell"/>
</dbReference>
<dbReference type="Gene3D" id="1.10.287.540">
    <property type="entry name" value="Helix hairpin bin"/>
    <property type="match status" value="1"/>
</dbReference>
<dbReference type="HAMAP" id="MF_01103">
    <property type="entry name" value="UPF0291"/>
    <property type="match status" value="1"/>
</dbReference>
<dbReference type="InterPro" id="IPR009242">
    <property type="entry name" value="DUF896"/>
</dbReference>
<dbReference type="PANTHER" id="PTHR37300">
    <property type="entry name" value="UPF0291 PROTEIN CBO2609/CLC_2481"/>
    <property type="match status" value="1"/>
</dbReference>
<dbReference type="PANTHER" id="PTHR37300:SF1">
    <property type="entry name" value="UPF0291 PROTEIN YNZC"/>
    <property type="match status" value="1"/>
</dbReference>
<dbReference type="Pfam" id="PF05979">
    <property type="entry name" value="DUF896"/>
    <property type="match status" value="1"/>
</dbReference>
<dbReference type="SUPFAM" id="SSF158221">
    <property type="entry name" value="YnzC-like"/>
    <property type="match status" value="1"/>
</dbReference>
<name>Y526_LISMF</name>
<proteinExistence type="inferred from homology"/>